<feature type="chain" id="PRO_1000134465" description="Acetyl-coenzyme A carboxylase carboxyl transferase subunit alpha">
    <location>
        <begin position="1"/>
        <end position="323"/>
    </location>
</feature>
<feature type="domain" description="CoA carboxyltransferase C-terminal" evidence="2">
    <location>
        <begin position="39"/>
        <end position="293"/>
    </location>
</feature>
<keyword id="KW-0067">ATP-binding</keyword>
<keyword id="KW-0963">Cytoplasm</keyword>
<keyword id="KW-0275">Fatty acid biosynthesis</keyword>
<keyword id="KW-0276">Fatty acid metabolism</keyword>
<keyword id="KW-0444">Lipid biosynthesis</keyword>
<keyword id="KW-0443">Lipid metabolism</keyword>
<keyword id="KW-0547">Nucleotide-binding</keyword>
<keyword id="KW-1185">Reference proteome</keyword>
<keyword id="KW-0808">Transferase</keyword>
<evidence type="ECO:0000255" key="1">
    <source>
        <dbReference type="HAMAP-Rule" id="MF_00823"/>
    </source>
</evidence>
<evidence type="ECO:0000255" key="2">
    <source>
        <dbReference type="PROSITE-ProRule" id="PRU01137"/>
    </source>
</evidence>
<accession>A9AHN8</accession>
<name>ACCA_BURM1</name>
<sequence length="323" mass="35625">MKTTFLDFEQPIAELEAKIEELRFVQDDSAVDISEEIERLSKKSQQLTKDLYANLTPWQVSQIARHPQRPYTLDYVAELFTDFHELHGDRAFADDLSIVGGLARFGGHPCMVIGHQKGRDTKERAARNFGMPRPEGYRKAERLMRLAEKFGLPIFTFVDTPGAYPGIGAEERGQSEAIGRNLYVMAELKTPIITTVIGEGGSGGALAIAVADTVMMLQFSTYSVISPEGCASILWKSAAKAPEAAEALGLTAHRLKALGLIDKIINEPLGGAHRDPKGMAALLRRALADSLRQFQGMSIDALRERRFERLMAYGKFKETTPGA</sequence>
<protein>
    <recommendedName>
        <fullName evidence="1">Acetyl-coenzyme A carboxylase carboxyl transferase subunit alpha</fullName>
        <shortName evidence="1">ACCase subunit alpha</shortName>
        <shortName evidence="1">Acetyl-CoA carboxylase carboxyltransferase subunit alpha</shortName>
        <ecNumber evidence="1">2.1.3.15</ecNumber>
    </recommendedName>
</protein>
<proteinExistence type="inferred from homology"/>
<reference key="1">
    <citation type="submission" date="2007-10" db="EMBL/GenBank/DDBJ databases">
        <title>Complete sequence of chromosome 1 of Burkholderia multivorans ATCC 17616.</title>
        <authorList>
            <person name="Copeland A."/>
            <person name="Lucas S."/>
            <person name="Lapidus A."/>
            <person name="Barry K."/>
            <person name="Glavina del Rio T."/>
            <person name="Dalin E."/>
            <person name="Tice H."/>
            <person name="Pitluck S."/>
            <person name="Chain P."/>
            <person name="Malfatti S."/>
            <person name="Shin M."/>
            <person name="Vergez L."/>
            <person name="Schmutz J."/>
            <person name="Larimer F."/>
            <person name="Land M."/>
            <person name="Hauser L."/>
            <person name="Kyrpides N."/>
            <person name="Kim E."/>
            <person name="Tiedje J."/>
            <person name="Richardson P."/>
        </authorList>
    </citation>
    <scope>NUCLEOTIDE SEQUENCE [LARGE SCALE GENOMIC DNA]</scope>
    <source>
        <strain>ATCC 17616 / 249</strain>
    </source>
</reference>
<reference key="2">
    <citation type="submission" date="2007-04" db="EMBL/GenBank/DDBJ databases">
        <title>Complete genome sequence of Burkholderia multivorans ATCC 17616.</title>
        <authorList>
            <person name="Ohtsubo Y."/>
            <person name="Yamashita A."/>
            <person name="Kurokawa K."/>
            <person name="Takami H."/>
            <person name="Yuhara S."/>
            <person name="Nishiyama E."/>
            <person name="Endo R."/>
            <person name="Miyazaki R."/>
            <person name="Ono A."/>
            <person name="Yano K."/>
            <person name="Ito M."/>
            <person name="Sota M."/>
            <person name="Yuji N."/>
            <person name="Hattori M."/>
            <person name="Tsuda M."/>
        </authorList>
    </citation>
    <scope>NUCLEOTIDE SEQUENCE [LARGE SCALE GENOMIC DNA]</scope>
    <source>
        <strain>ATCC 17616 / 249</strain>
    </source>
</reference>
<comment type="function">
    <text evidence="1">Component of the acetyl coenzyme A carboxylase (ACC) complex. First, biotin carboxylase catalyzes the carboxylation of biotin on its carrier protein (BCCP) and then the CO(2) group is transferred by the carboxyltransferase to acetyl-CoA to form malonyl-CoA.</text>
</comment>
<comment type="catalytic activity">
    <reaction evidence="1">
        <text>N(6)-carboxybiotinyl-L-lysyl-[protein] + acetyl-CoA = N(6)-biotinyl-L-lysyl-[protein] + malonyl-CoA</text>
        <dbReference type="Rhea" id="RHEA:54728"/>
        <dbReference type="Rhea" id="RHEA-COMP:10505"/>
        <dbReference type="Rhea" id="RHEA-COMP:10506"/>
        <dbReference type="ChEBI" id="CHEBI:57288"/>
        <dbReference type="ChEBI" id="CHEBI:57384"/>
        <dbReference type="ChEBI" id="CHEBI:83144"/>
        <dbReference type="ChEBI" id="CHEBI:83145"/>
        <dbReference type="EC" id="2.1.3.15"/>
    </reaction>
</comment>
<comment type="pathway">
    <text evidence="1">Lipid metabolism; malonyl-CoA biosynthesis; malonyl-CoA from acetyl-CoA: step 1/1.</text>
</comment>
<comment type="subunit">
    <text evidence="1">Acetyl-CoA carboxylase is a heterohexamer composed of biotin carboxyl carrier protein (AccB), biotin carboxylase (AccC) and two subunits each of ACCase subunit alpha (AccA) and ACCase subunit beta (AccD).</text>
</comment>
<comment type="subcellular location">
    <subcellularLocation>
        <location evidence="1">Cytoplasm</location>
    </subcellularLocation>
</comment>
<comment type="similarity">
    <text evidence="1">Belongs to the AccA family.</text>
</comment>
<dbReference type="EC" id="2.1.3.15" evidence="1"/>
<dbReference type="EMBL" id="CP000868">
    <property type="protein sequence ID" value="ABX14893.1"/>
    <property type="molecule type" value="Genomic_DNA"/>
</dbReference>
<dbReference type="EMBL" id="AP009385">
    <property type="protein sequence ID" value="BAG43959.1"/>
    <property type="molecule type" value="Genomic_DNA"/>
</dbReference>
<dbReference type="RefSeq" id="WP_006401892.1">
    <property type="nucleotide sequence ID" value="NC_010804.1"/>
</dbReference>
<dbReference type="SMR" id="A9AHN8"/>
<dbReference type="STRING" id="395019.BMULJ_02050"/>
<dbReference type="KEGG" id="bmj:BMULJ_02050"/>
<dbReference type="KEGG" id="bmu:Bmul_1205"/>
<dbReference type="eggNOG" id="COG0825">
    <property type="taxonomic scope" value="Bacteria"/>
</dbReference>
<dbReference type="HOGENOM" id="CLU_015486_0_2_4"/>
<dbReference type="UniPathway" id="UPA00655">
    <property type="reaction ID" value="UER00711"/>
</dbReference>
<dbReference type="Proteomes" id="UP000008815">
    <property type="component" value="Chromosome 1"/>
</dbReference>
<dbReference type="GO" id="GO:0009317">
    <property type="term" value="C:acetyl-CoA carboxylase complex"/>
    <property type="evidence" value="ECO:0007669"/>
    <property type="project" value="InterPro"/>
</dbReference>
<dbReference type="GO" id="GO:0003989">
    <property type="term" value="F:acetyl-CoA carboxylase activity"/>
    <property type="evidence" value="ECO:0007669"/>
    <property type="project" value="InterPro"/>
</dbReference>
<dbReference type="GO" id="GO:0005524">
    <property type="term" value="F:ATP binding"/>
    <property type="evidence" value="ECO:0007669"/>
    <property type="project" value="UniProtKB-KW"/>
</dbReference>
<dbReference type="GO" id="GO:0016743">
    <property type="term" value="F:carboxyl- or carbamoyltransferase activity"/>
    <property type="evidence" value="ECO:0007669"/>
    <property type="project" value="UniProtKB-UniRule"/>
</dbReference>
<dbReference type="GO" id="GO:0006633">
    <property type="term" value="P:fatty acid biosynthetic process"/>
    <property type="evidence" value="ECO:0007669"/>
    <property type="project" value="UniProtKB-KW"/>
</dbReference>
<dbReference type="GO" id="GO:2001295">
    <property type="term" value="P:malonyl-CoA biosynthetic process"/>
    <property type="evidence" value="ECO:0007669"/>
    <property type="project" value="UniProtKB-UniRule"/>
</dbReference>
<dbReference type="Gene3D" id="3.90.226.10">
    <property type="entry name" value="2-enoyl-CoA Hydratase, Chain A, domain 1"/>
    <property type="match status" value="1"/>
</dbReference>
<dbReference type="HAMAP" id="MF_00823">
    <property type="entry name" value="AcetylCoA_CT_alpha"/>
    <property type="match status" value="1"/>
</dbReference>
<dbReference type="InterPro" id="IPR001095">
    <property type="entry name" value="Acetyl_CoA_COase_a_su"/>
</dbReference>
<dbReference type="InterPro" id="IPR029045">
    <property type="entry name" value="ClpP/crotonase-like_dom_sf"/>
</dbReference>
<dbReference type="InterPro" id="IPR011763">
    <property type="entry name" value="COA_CT_C"/>
</dbReference>
<dbReference type="NCBIfam" id="TIGR00513">
    <property type="entry name" value="accA"/>
    <property type="match status" value="1"/>
</dbReference>
<dbReference type="NCBIfam" id="NF041504">
    <property type="entry name" value="AccA_sub"/>
    <property type="match status" value="1"/>
</dbReference>
<dbReference type="NCBIfam" id="NF004344">
    <property type="entry name" value="PRK05724.1"/>
    <property type="match status" value="1"/>
</dbReference>
<dbReference type="PANTHER" id="PTHR42853">
    <property type="entry name" value="ACETYL-COENZYME A CARBOXYLASE CARBOXYL TRANSFERASE SUBUNIT ALPHA"/>
    <property type="match status" value="1"/>
</dbReference>
<dbReference type="PANTHER" id="PTHR42853:SF3">
    <property type="entry name" value="ACETYL-COENZYME A CARBOXYLASE CARBOXYL TRANSFERASE SUBUNIT ALPHA, CHLOROPLASTIC"/>
    <property type="match status" value="1"/>
</dbReference>
<dbReference type="Pfam" id="PF03255">
    <property type="entry name" value="ACCA"/>
    <property type="match status" value="1"/>
</dbReference>
<dbReference type="PRINTS" id="PR01069">
    <property type="entry name" value="ACCCTRFRASEA"/>
</dbReference>
<dbReference type="SUPFAM" id="SSF52096">
    <property type="entry name" value="ClpP/crotonase"/>
    <property type="match status" value="1"/>
</dbReference>
<dbReference type="PROSITE" id="PS50989">
    <property type="entry name" value="COA_CT_CTER"/>
    <property type="match status" value="1"/>
</dbReference>
<organism>
    <name type="scientific">Burkholderia multivorans (strain ATCC 17616 / 249)</name>
    <dbReference type="NCBI Taxonomy" id="395019"/>
    <lineage>
        <taxon>Bacteria</taxon>
        <taxon>Pseudomonadati</taxon>
        <taxon>Pseudomonadota</taxon>
        <taxon>Betaproteobacteria</taxon>
        <taxon>Burkholderiales</taxon>
        <taxon>Burkholderiaceae</taxon>
        <taxon>Burkholderia</taxon>
        <taxon>Burkholderia cepacia complex</taxon>
    </lineage>
</organism>
<gene>
    <name evidence="1" type="primary">accA</name>
    <name type="ordered locus">Bmul_1205</name>
    <name type="ordered locus">BMULJ_02050</name>
</gene>